<proteinExistence type="inferred from homology"/>
<protein>
    <recommendedName>
        <fullName>GTP cyclohydrolase 1 type 2 homolog</fullName>
    </recommendedName>
</protein>
<name>GCH1L_STRP8</name>
<dbReference type="EMBL" id="AE009949">
    <property type="protein sequence ID" value="AAL97628.1"/>
    <property type="molecule type" value="Genomic_DNA"/>
</dbReference>
<dbReference type="RefSeq" id="WP_002984887.1">
    <property type="nucleotide sequence ID" value="NC_003485.1"/>
</dbReference>
<dbReference type="SMR" id="P67276"/>
<dbReference type="KEGG" id="spm:spyM18_0988"/>
<dbReference type="HOGENOM" id="CLU_037423_2_0_9"/>
<dbReference type="GO" id="GO:0005737">
    <property type="term" value="C:cytoplasm"/>
    <property type="evidence" value="ECO:0007669"/>
    <property type="project" value="TreeGrafter"/>
</dbReference>
<dbReference type="GO" id="GO:0046872">
    <property type="term" value="F:metal ion binding"/>
    <property type="evidence" value="ECO:0007669"/>
    <property type="project" value="UniProtKB-KW"/>
</dbReference>
<dbReference type="FunFam" id="3.40.1390.30:FF:000006">
    <property type="entry name" value="Dinuclear metal center protein, YbgI family"/>
    <property type="match status" value="1"/>
</dbReference>
<dbReference type="Gene3D" id="3.40.1390.30">
    <property type="entry name" value="NIF3 (NGG1p interacting factor 3)-like"/>
    <property type="match status" value="2"/>
</dbReference>
<dbReference type="InterPro" id="IPR002678">
    <property type="entry name" value="DUF34/NIF3"/>
</dbReference>
<dbReference type="InterPro" id="IPR036069">
    <property type="entry name" value="DUF34/NIF3_sf"/>
</dbReference>
<dbReference type="NCBIfam" id="TIGR00486">
    <property type="entry name" value="YbgI_SA1388"/>
    <property type="match status" value="1"/>
</dbReference>
<dbReference type="PANTHER" id="PTHR13799:SF14">
    <property type="entry name" value="GTP CYCLOHYDROLASE 1 TYPE 2 HOMOLOG"/>
    <property type="match status" value="1"/>
</dbReference>
<dbReference type="PANTHER" id="PTHR13799">
    <property type="entry name" value="NGG1 INTERACTING FACTOR 3"/>
    <property type="match status" value="1"/>
</dbReference>
<dbReference type="Pfam" id="PF01784">
    <property type="entry name" value="DUF34_NIF3"/>
    <property type="match status" value="1"/>
</dbReference>
<dbReference type="SUPFAM" id="SSF102705">
    <property type="entry name" value="NIF3 (NGG1p interacting factor 3)-like"/>
    <property type="match status" value="1"/>
</dbReference>
<sequence>MKAKTLIDAYEAFCPLDLSMEGDVKGLQMGSLDKDIRKVMITLDIRESTVAEAIKNEVDLIITKHAPIFKPLKDLVSSPQRDILLDLVKHDISVYVSHTNIDIVPGGLNDWFCDLLEIKEATYLSETKEGFGIGRIGTVKEQALEELASKVKRVFDLDTVRLIRYDKENPLISKIAICGGSGGEFYQDAVQKGADVYITGDIYYHTAQEMLTEGLFAVDPGHHIEVLFTEKLKEKLQGWKEENGWDVSIISSKASTNPFSHL</sequence>
<comment type="subunit">
    <text evidence="1">Homohexamer.</text>
</comment>
<comment type="similarity">
    <text evidence="2">Belongs to the GTP cyclohydrolase I type 2/NIF3 family.</text>
</comment>
<organism>
    <name type="scientific">Streptococcus pyogenes serotype M18 (strain MGAS8232)</name>
    <dbReference type="NCBI Taxonomy" id="186103"/>
    <lineage>
        <taxon>Bacteria</taxon>
        <taxon>Bacillati</taxon>
        <taxon>Bacillota</taxon>
        <taxon>Bacilli</taxon>
        <taxon>Lactobacillales</taxon>
        <taxon>Streptococcaceae</taxon>
        <taxon>Streptococcus</taxon>
    </lineage>
</organism>
<evidence type="ECO:0000250" key="1">
    <source>
        <dbReference type="UniProtKB" id="P0AFP6"/>
    </source>
</evidence>
<evidence type="ECO:0000305" key="2"/>
<reference key="1">
    <citation type="journal article" date="2002" name="Proc. Natl. Acad. Sci. U.S.A.">
        <title>Genome sequence and comparative microarray analysis of serotype M18 group A Streptococcus strains associated with acute rheumatic fever outbreaks.</title>
        <authorList>
            <person name="Smoot J.C."/>
            <person name="Barbian K.D."/>
            <person name="Van Gompel J.J."/>
            <person name="Smoot L.M."/>
            <person name="Chaussee M.S."/>
            <person name="Sylva G.L."/>
            <person name="Sturdevant D.E."/>
            <person name="Ricklefs S.M."/>
            <person name="Porcella S.F."/>
            <person name="Parkins L.D."/>
            <person name="Beres S.B."/>
            <person name="Campbell D.S."/>
            <person name="Smith T.M."/>
            <person name="Zhang Q."/>
            <person name="Kapur V."/>
            <person name="Daly J.A."/>
            <person name="Veasy L.G."/>
            <person name="Musser J.M."/>
        </authorList>
    </citation>
    <scope>NUCLEOTIDE SEQUENCE [LARGE SCALE GENOMIC DNA]</scope>
    <source>
        <strain>MGAS8232</strain>
    </source>
</reference>
<gene>
    <name type="ordered locus">spyM18_0988</name>
</gene>
<accession>P67276</accession>
<accession>Q9A049</accession>
<keyword id="KW-0479">Metal-binding</keyword>
<feature type="chain" id="PRO_0000147340" description="GTP cyclohydrolase 1 type 2 homolog">
    <location>
        <begin position="1"/>
        <end position="262"/>
    </location>
</feature>
<feature type="binding site" evidence="1">
    <location>
        <position position="65"/>
    </location>
    <ligand>
        <name>a divalent metal cation</name>
        <dbReference type="ChEBI" id="CHEBI:60240"/>
        <label>2</label>
    </ligand>
</feature>
<feature type="binding site" evidence="1">
    <location>
        <position position="102"/>
    </location>
    <ligand>
        <name>a divalent metal cation</name>
        <dbReference type="ChEBI" id="CHEBI:60240"/>
        <label>1</label>
    </ligand>
</feature>
<feature type="binding site" evidence="1">
    <location>
        <position position="222"/>
    </location>
    <ligand>
        <name>a divalent metal cation</name>
        <dbReference type="ChEBI" id="CHEBI:60240"/>
        <label>2</label>
    </ligand>
</feature>
<feature type="binding site" evidence="1">
    <location>
        <position position="225"/>
    </location>
    <ligand>
        <name>a divalent metal cation</name>
        <dbReference type="ChEBI" id="CHEBI:60240"/>
        <label>1</label>
    </ligand>
</feature>
<feature type="binding site" evidence="1">
    <location>
        <position position="225"/>
    </location>
    <ligand>
        <name>a divalent metal cation</name>
        <dbReference type="ChEBI" id="CHEBI:60240"/>
        <label>2</label>
    </ligand>
</feature>